<accession>Q5JR98</accession>
<dbReference type="EMBL" id="DQ132441">
    <property type="protein sequence ID" value="ABA06522.1"/>
    <property type="molecule type" value="mRNA"/>
</dbReference>
<dbReference type="EMBL" id="AL592166">
    <property type="status" value="NOT_ANNOTATED_CDS"/>
    <property type="molecule type" value="Genomic_DNA"/>
</dbReference>
<dbReference type="EMBL" id="BC092499">
    <property type="protein sequence ID" value="AAH92499.1"/>
    <property type="molecule type" value="mRNA"/>
</dbReference>
<dbReference type="CCDS" id="CCDS30699.1"/>
<dbReference type="RefSeq" id="NP_001013654.1">
    <property type="nucleotide sequence ID" value="NM_001013632.4"/>
</dbReference>
<dbReference type="RefSeq" id="NP_001364463.1">
    <property type="nucleotide sequence ID" value="NM_001377534.1"/>
</dbReference>
<dbReference type="RefSeq" id="NP_001364464.1">
    <property type="nucleotide sequence ID" value="NM_001377535.1"/>
</dbReference>
<dbReference type="RefSeq" id="NP_001364465.1">
    <property type="nucleotide sequence ID" value="NM_001377536.1"/>
</dbReference>
<dbReference type="RefSeq" id="XP_011539677.1">
    <property type="nucleotide sequence ID" value="XM_011541375.2"/>
</dbReference>
<dbReference type="RefSeq" id="XP_011539678.1">
    <property type="nucleotide sequence ID" value="XM_011541376.2"/>
</dbReference>
<dbReference type="RefSeq" id="XP_047275573.1">
    <property type="nucleotide sequence ID" value="XM_047419617.1"/>
</dbReference>
<dbReference type="RefSeq" id="XP_047275574.1">
    <property type="nucleotide sequence ID" value="XM_047419618.1"/>
</dbReference>
<dbReference type="RefSeq" id="XP_047275575.1">
    <property type="nucleotide sequence ID" value="XM_047419619.1"/>
</dbReference>
<dbReference type="RefSeq" id="XP_054192343.1">
    <property type="nucleotide sequence ID" value="XM_054336368.1"/>
</dbReference>
<dbReference type="RefSeq" id="XP_054192344.1">
    <property type="nucleotide sequence ID" value="XM_054336369.1"/>
</dbReference>
<dbReference type="RefSeq" id="XP_054192345.1">
    <property type="nucleotide sequence ID" value="XM_054336370.1"/>
</dbReference>
<dbReference type="SMR" id="Q5JR98"/>
<dbReference type="BioGRID" id="131262">
    <property type="interactions" value="21"/>
</dbReference>
<dbReference type="FunCoup" id="Q5JR98">
    <property type="interactions" value="15"/>
</dbReference>
<dbReference type="IntAct" id="Q5JR98">
    <property type="interactions" value="15"/>
</dbReference>
<dbReference type="STRING" id="9606.ENSP00000341803"/>
<dbReference type="iPTMnet" id="Q5JR98"/>
<dbReference type="PhosphoSitePlus" id="Q5JR98"/>
<dbReference type="BioMuta" id="TCTEX1D4"/>
<dbReference type="DMDM" id="74741821"/>
<dbReference type="jPOST" id="Q5JR98"/>
<dbReference type="MassIVE" id="Q5JR98"/>
<dbReference type="PaxDb" id="9606-ENSP00000341803"/>
<dbReference type="PeptideAtlas" id="Q5JR98"/>
<dbReference type="ProteomicsDB" id="63077"/>
<dbReference type="Antibodypedia" id="32555">
    <property type="antibodies" value="65 antibodies from 21 providers"/>
</dbReference>
<dbReference type="DNASU" id="343521"/>
<dbReference type="Ensembl" id="ENST00000339355.3">
    <property type="protein sequence ID" value="ENSP00000341803.2"/>
    <property type="gene ID" value="ENSG00000188396.4"/>
</dbReference>
<dbReference type="Ensembl" id="ENST00000675259.1">
    <property type="protein sequence ID" value="ENSP00000501642.1"/>
    <property type="gene ID" value="ENSG00000188396.4"/>
</dbReference>
<dbReference type="GeneID" id="343521"/>
<dbReference type="KEGG" id="hsa:343521"/>
<dbReference type="MANE-Select" id="ENST00000339355.3">
    <property type="protein sequence ID" value="ENSP00000341803.2"/>
    <property type="RefSeq nucleotide sequence ID" value="NM_001377534.1"/>
    <property type="RefSeq protein sequence ID" value="NP_001364463.1"/>
</dbReference>
<dbReference type="UCSC" id="uc057fwn.1">
    <property type="organism name" value="human"/>
</dbReference>
<dbReference type="AGR" id="HGNC:32315"/>
<dbReference type="CTD" id="343521"/>
<dbReference type="DisGeNET" id="343521"/>
<dbReference type="GeneCards" id="DYNLT4"/>
<dbReference type="HGNC" id="HGNC:32315">
    <property type="gene designation" value="DYNLT4"/>
</dbReference>
<dbReference type="HPA" id="ENSG00000188396">
    <property type="expression patterns" value="Group enriched (choroid plexus, fallopian tube)"/>
</dbReference>
<dbReference type="MIM" id="611713">
    <property type="type" value="gene"/>
</dbReference>
<dbReference type="neXtProt" id="NX_Q5JR98"/>
<dbReference type="OpenTargets" id="ENSG00000188396"/>
<dbReference type="VEuPathDB" id="HostDB:ENSG00000188396"/>
<dbReference type="eggNOG" id="KOG4108">
    <property type="taxonomic scope" value="Eukaryota"/>
</dbReference>
<dbReference type="GeneTree" id="ENSGT00940000162474"/>
<dbReference type="HOGENOM" id="CLU_097204_1_1_1"/>
<dbReference type="InParanoid" id="Q5JR98"/>
<dbReference type="OMA" id="CPPRYKL"/>
<dbReference type="OrthoDB" id="10260741at2759"/>
<dbReference type="PAN-GO" id="Q5JR98">
    <property type="GO annotations" value="4 GO annotations based on evolutionary models"/>
</dbReference>
<dbReference type="PhylomeDB" id="Q5JR98"/>
<dbReference type="TreeFam" id="TF313904"/>
<dbReference type="PathwayCommons" id="Q5JR98"/>
<dbReference type="SignaLink" id="Q5JR98"/>
<dbReference type="BioGRID-ORCS" id="343521">
    <property type="hits" value="25 hits in 1075 CRISPR screens"/>
</dbReference>
<dbReference type="GenomeRNAi" id="343521"/>
<dbReference type="Pharos" id="Q5JR98">
    <property type="development level" value="Tbio"/>
</dbReference>
<dbReference type="PRO" id="PR:Q5JR98"/>
<dbReference type="Proteomes" id="UP000005640">
    <property type="component" value="Chromosome 1"/>
</dbReference>
<dbReference type="RNAct" id="Q5JR98">
    <property type="molecule type" value="protein"/>
</dbReference>
<dbReference type="Bgee" id="ENSG00000188396">
    <property type="expression patterns" value="Expressed in right uterine tube and 90 other cell types or tissues"/>
</dbReference>
<dbReference type="GO" id="GO:0001669">
    <property type="term" value="C:acrosomal vesicle"/>
    <property type="evidence" value="ECO:0000314"/>
    <property type="project" value="UniProtKB"/>
</dbReference>
<dbReference type="GO" id="GO:0005930">
    <property type="term" value="C:axoneme"/>
    <property type="evidence" value="ECO:0000314"/>
    <property type="project" value="UniProtKB"/>
</dbReference>
<dbReference type="GO" id="GO:0005737">
    <property type="term" value="C:cytoplasm"/>
    <property type="evidence" value="ECO:0000318"/>
    <property type="project" value="GO_Central"/>
</dbReference>
<dbReference type="GO" id="GO:0005868">
    <property type="term" value="C:cytoplasmic dynein complex"/>
    <property type="evidence" value="ECO:0000318"/>
    <property type="project" value="GO_Central"/>
</dbReference>
<dbReference type="GO" id="GO:0043231">
    <property type="term" value="C:intracellular membrane-bounded organelle"/>
    <property type="evidence" value="ECO:0000314"/>
    <property type="project" value="HPA"/>
</dbReference>
<dbReference type="GO" id="GO:0005815">
    <property type="term" value="C:microtubule organizing center"/>
    <property type="evidence" value="ECO:0000314"/>
    <property type="project" value="UniProtKB"/>
</dbReference>
<dbReference type="GO" id="GO:0005730">
    <property type="term" value="C:nucleolus"/>
    <property type="evidence" value="ECO:0000314"/>
    <property type="project" value="HPA"/>
</dbReference>
<dbReference type="GO" id="GO:0005634">
    <property type="term" value="C:nucleus"/>
    <property type="evidence" value="ECO:0000250"/>
    <property type="project" value="UniProtKB"/>
</dbReference>
<dbReference type="GO" id="GO:0036126">
    <property type="term" value="C:sperm flagellum"/>
    <property type="evidence" value="ECO:0000314"/>
    <property type="project" value="MGI"/>
</dbReference>
<dbReference type="GO" id="GO:0045505">
    <property type="term" value="F:dynein intermediate chain binding"/>
    <property type="evidence" value="ECO:0000318"/>
    <property type="project" value="GO_Central"/>
</dbReference>
<dbReference type="GO" id="GO:0008157">
    <property type="term" value="F:protein phosphatase 1 binding"/>
    <property type="evidence" value="ECO:0000314"/>
    <property type="project" value="MGI"/>
</dbReference>
<dbReference type="GO" id="GO:0007018">
    <property type="term" value="P:microtubule-based movement"/>
    <property type="evidence" value="ECO:0000318"/>
    <property type="project" value="GO_Central"/>
</dbReference>
<dbReference type="CDD" id="cd21461">
    <property type="entry name" value="DLC-like_TCTEX1D4"/>
    <property type="match status" value="1"/>
</dbReference>
<dbReference type="FunFam" id="3.30.1140.40:FF:000003">
    <property type="entry name" value="tctex1 domain-containing protein 2"/>
    <property type="match status" value="1"/>
</dbReference>
<dbReference type="Gene3D" id="3.30.1140.40">
    <property type="entry name" value="Tctex-1"/>
    <property type="match status" value="1"/>
</dbReference>
<dbReference type="InterPro" id="IPR005334">
    <property type="entry name" value="Tctex-1-like"/>
</dbReference>
<dbReference type="InterPro" id="IPR038586">
    <property type="entry name" value="Tctex-1-like_sf"/>
</dbReference>
<dbReference type="PANTHER" id="PTHR21255:SF55">
    <property type="entry name" value="DYNEIN LIGHT CHAIN TCTEX-TYPE 4"/>
    <property type="match status" value="1"/>
</dbReference>
<dbReference type="PANTHER" id="PTHR21255">
    <property type="entry name" value="T-COMPLEX-ASSOCIATED-TESTIS-EXPRESSED 1/ DYNEIN LIGHT CHAIN"/>
    <property type="match status" value="1"/>
</dbReference>
<dbReference type="Pfam" id="PF03645">
    <property type="entry name" value="Tctex-1"/>
    <property type="match status" value="1"/>
</dbReference>
<organism>
    <name type="scientific">Homo sapiens</name>
    <name type="common">Human</name>
    <dbReference type="NCBI Taxonomy" id="9606"/>
    <lineage>
        <taxon>Eukaryota</taxon>
        <taxon>Metazoa</taxon>
        <taxon>Chordata</taxon>
        <taxon>Craniata</taxon>
        <taxon>Vertebrata</taxon>
        <taxon>Euteleostomi</taxon>
        <taxon>Mammalia</taxon>
        <taxon>Eutheria</taxon>
        <taxon>Euarchontoglires</taxon>
        <taxon>Primates</taxon>
        <taxon>Haplorrhini</taxon>
        <taxon>Catarrhini</taxon>
        <taxon>Hominidae</taxon>
        <taxon>Homo</taxon>
    </lineage>
</organism>
<proteinExistence type="evidence at protein level"/>
<reference key="1">
    <citation type="journal article" date="2006" name="J. Biol. Chem.">
        <title>Identification of Tctex2beta, a novel dynein light chain family member that interacts with different transforming growth factor-beta receptors.</title>
        <authorList>
            <person name="Meng Q.-J."/>
            <person name="Lux A."/>
            <person name="Holloschi A."/>
            <person name="Li J."/>
            <person name="Hughes J.M.X."/>
            <person name="Foerg T."/>
            <person name="McCarthy J.E.G."/>
            <person name="Heagerty A.M."/>
            <person name="Kioschis P."/>
            <person name="Hafner M."/>
            <person name="Garland J.M."/>
        </authorList>
    </citation>
    <scope>NUCLEOTIDE SEQUENCE [MRNA]</scope>
    <scope>INTERACTION WITH ENG; TGFBR2 AND TGFBR3</scope>
    <scope>TISSUE SPECIFICITY</scope>
</reference>
<reference key="2">
    <citation type="journal article" date="2006" name="Nature">
        <title>The DNA sequence and biological annotation of human chromosome 1.</title>
        <authorList>
            <person name="Gregory S.G."/>
            <person name="Barlow K.F."/>
            <person name="McLay K.E."/>
            <person name="Kaul R."/>
            <person name="Swarbreck D."/>
            <person name="Dunham A."/>
            <person name="Scott C.E."/>
            <person name="Howe K.L."/>
            <person name="Woodfine K."/>
            <person name="Spencer C.C.A."/>
            <person name="Jones M.C."/>
            <person name="Gillson C."/>
            <person name="Searle S."/>
            <person name="Zhou Y."/>
            <person name="Kokocinski F."/>
            <person name="McDonald L."/>
            <person name="Evans R."/>
            <person name="Phillips K."/>
            <person name="Atkinson A."/>
            <person name="Cooper R."/>
            <person name="Jones C."/>
            <person name="Hall R.E."/>
            <person name="Andrews T.D."/>
            <person name="Lloyd C."/>
            <person name="Ainscough R."/>
            <person name="Almeida J.P."/>
            <person name="Ambrose K.D."/>
            <person name="Anderson F."/>
            <person name="Andrew R.W."/>
            <person name="Ashwell R.I.S."/>
            <person name="Aubin K."/>
            <person name="Babbage A.K."/>
            <person name="Bagguley C.L."/>
            <person name="Bailey J."/>
            <person name="Beasley H."/>
            <person name="Bethel G."/>
            <person name="Bird C.P."/>
            <person name="Bray-Allen S."/>
            <person name="Brown J.Y."/>
            <person name="Brown A.J."/>
            <person name="Buckley D."/>
            <person name="Burton J."/>
            <person name="Bye J."/>
            <person name="Carder C."/>
            <person name="Chapman J.C."/>
            <person name="Clark S.Y."/>
            <person name="Clarke G."/>
            <person name="Clee C."/>
            <person name="Cobley V."/>
            <person name="Collier R.E."/>
            <person name="Corby N."/>
            <person name="Coville G.J."/>
            <person name="Davies J."/>
            <person name="Deadman R."/>
            <person name="Dunn M."/>
            <person name="Earthrowl M."/>
            <person name="Ellington A.G."/>
            <person name="Errington H."/>
            <person name="Frankish A."/>
            <person name="Frankland J."/>
            <person name="French L."/>
            <person name="Garner P."/>
            <person name="Garnett J."/>
            <person name="Gay L."/>
            <person name="Ghori M.R.J."/>
            <person name="Gibson R."/>
            <person name="Gilby L.M."/>
            <person name="Gillett W."/>
            <person name="Glithero R.J."/>
            <person name="Grafham D.V."/>
            <person name="Griffiths C."/>
            <person name="Griffiths-Jones S."/>
            <person name="Grocock R."/>
            <person name="Hammond S."/>
            <person name="Harrison E.S.I."/>
            <person name="Hart E."/>
            <person name="Haugen E."/>
            <person name="Heath P.D."/>
            <person name="Holmes S."/>
            <person name="Holt K."/>
            <person name="Howden P.J."/>
            <person name="Hunt A.R."/>
            <person name="Hunt S.E."/>
            <person name="Hunter G."/>
            <person name="Isherwood J."/>
            <person name="James R."/>
            <person name="Johnson C."/>
            <person name="Johnson D."/>
            <person name="Joy A."/>
            <person name="Kay M."/>
            <person name="Kershaw J.K."/>
            <person name="Kibukawa M."/>
            <person name="Kimberley A.M."/>
            <person name="King A."/>
            <person name="Knights A.J."/>
            <person name="Lad H."/>
            <person name="Laird G."/>
            <person name="Lawlor S."/>
            <person name="Leongamornlert D.A."/>
            <person name="Lloyd D.M."/>
            <person name="Loveland J."/>
            <person name="Lovell J."/>
            <person name="Lush M.J."/>
            <person name="Lyne R."/>
            <person name="Martin S."/>
            <person name="Mashreghi-Mohammadi M."/>
            <person name="Matthews L."/>
            <person name="Matthews N.S.W."/>
            <person name="McLaren S."/>
            <person name="Milne S."/>
            <person name="Mistry S."/>
            <person name="Moore M.J.F."/>
            <person name="Nickerson T."/>
            <person name="O'Dell C.N."/>
            <person name="Oliver K."/>
            <person name="Palmeiri A."/>
            <person name="Palmer S.A."/>
            <person name="Parker A."/>
            <person name="Patel D."/>
            <person name="Pearce A.V."/>
            <person name="Peck A.I."/>
            <person name="Pelan S."/>
            <person name="Phelps K."/>
            <person name="Phillimore B.J."/>
            <person name="Plumb R."/>
            <person name="Rajan J."/>
            <person name="Raymond C."/>
            <person name="Rouse G."/>
            <person name="Saenphimmachak C."/>
            <person name="Sehra H.K."/>
            <person name="Sheridan E."/>
            <person name="Shownkeen R."/>
            <person name="Sims S."/>
            <person name="Skuce C.D."/>
            <person name="Smith M."/>
            <person name="Steward C."/>
            <person name="Subramanian S."/>
            <person name="Sycamore N."/>
            <person name="Tracey A."/>
            <person name="Tromans A."/>
            <person name="Van Helmond Z."/>
            <person name="Wall M."/>
            <person name="Wallis J.M."/>
            <person name="White S."/>
            <person name="Whitehead S.L."/>
            <person name="Wilkinson J.E."/>
            <person name="Willey D.L."/>
            <person name="Williams H."/>
            <person name="Wilming L."/>
            <person name="Wray P.W."/>
            <person name="Wu Z."/>
            <person name="Coulson A."/>
            <person name="Vaudin M."/>
            <person name="Sulston J.E."/>
            <person name="Durbin R.M."/>
            <person name="Hubbard T."/>
            <person name="Wooster R."/>
            <person name="Dunham I."/>
            <person name="Carter N.P."/>
            <person name="McVean G."/>
            <person name="Ross M.T."/>
            <person name="Harrow J."/>
            <person name="Olson M.V."/>
            <person name="Beck S."/>
            <person name="Rogers J."/>
            <person name="Bentley D.R."/>
        </authorList>
    </citation>
    <scope>NUCLEOTIDE SEQUENCE [LARGE SCALE GENOMIC DNA]</scope>
</reference>
<reference key="3">
    <citation type="journal article" date="2004" name="Genome Res.">
        <title>The status, quality, and expansion of the NIH full-length cDNA project: the Mammalian Gene Collection (MGC).</title>
        <authorList>
            <consortium name="The MGC Project Team"/>
        </authorList>
    </citation>
    <scope>NUCLEOTIDE SEQUENCE [LARGE SCALE MRNA]</scope>
    <source>
        <tissue>Placenta</tissue>
    </source>
</reference>
<reference key="4">
    <citation type="journal article" date="2013" name="Biol. Open">
        <title>TCTEX1D4, a novel protein phosphatase 1 interactor: connecting the phosphatase to the microtubule network.</title>
        <authorList>
            <person name="Korrodi-Gregorio L."/>
            <person name="Vieira S.I."/>
            <person name="Esteves S.L."/>
            <person name="Silva J.V."/>
            <person name="Freitas M.J."/>
            <person name="Brauns A.K."/>
            <person name="Luers G."/>
            <person name="Abrantes J."/>
            <person name="Esteves P.J."/>
            <person name="da Cruz e Silva O.A."/>
            <person name="Fardilha M."/>
            <person name="da Cruz e Silva E.F."/>
        </authorList>
    </citation>
    <scope>SUBCELLULAR LOCATION</scope>
    <scope>INTERACTION WITH PPP1CC</scope>
    <scope>TISSUE SPECIFICITY</scope>
    <scope>MUTAGENESIS OF 90-ARG--PHE-93 AND PHE-93</scope>
</reference>
<reference key="5">
    <citation type="journal article" date="2021" name="EMBO Mol. Med.">
        <title>Characterising a homozygous two-exon deletion in UQCRH: comparing human and mouse phenotypes.</title>
        <authorList>
            <person name="Vidali S."/>
            <person name="Gerlini R."/>
            <person name="Thompson K."/>
            <person name="Urquhart J.E."/>
            <person name="Meisterknecht J."/>
            <person name="Aguilar-Pimentel J.A."/>
            <person name="Amarie O.V."/>
            <person name="Becker L."/>
            <person name="Breen C."/>
            <person name="Calzada-Wack J."/>
            <person name="Chhabra N.F."/>
            <person name="Cho Y.L."/>
            <person name="da Silva-Buttkus P."/>
            <person name="Feichtinger R.G."/>
            <person name="Gampe K."/>
            <person name="Garrett L."/>
            <person name="Hoefig K.P."/>
            <person name="Hoelter S.M."/>
            <person name="Jameson E."/>
            <person name="Klein-Rodewald T."/>
            <person name="Leuchtenberger S."/>
            <person name="Marschall S."/>
            <person name="Mayer-Kuckuk P."/>
            <person name="Miller G."/>
            <person name="Oestereicher M.A."/>
            <person name="Pfannes K."/>
            <person name="Rathkolb B."/>
            <person name="Rozman J."/>
            <person name="Sanders C."/>
            <person name="Spielmann N."/>
            <person name="Stoeger C."/>
            <person name="Szibor M."/>
            <person name="Treise I."/>
            <person name="Walter J.H."/>
            <person name="Wurst W."/>
            <person name="Mayr J.A."/>
            <person name="Fuchs H."/>
            <person name="Gaertner U."/>
            <person name="Wittig I."/>
            <person name="Taylor R.W."/>
            <person name="Newman W.G."/>
            <person name="Prokisch H."/>
            <person name="Gailus-Durner V."/>
            <person name="Hrabe de Angelis M."/>
        </authorList>
    </citation>
    <scope>VARIANT LEU-47</scope>
</reference>
<sequence length="221" mass="23353">MASRPLPPGRQEEENAKDSGRKPSPVRPRGCLPSIDEARPAGPGPAPASRRGSMLGLAASFSRRNSLVGPGAGPGGQRPSLGPVPPLGSRVSFSGLPLAPARWVAPSYRTEPVPGERWEAARAQRALEAALAAGLHDACYSSDEAARLVRELCEQVHVRLRELSPPRYKLVCSVVLGPRAGQGVHVVSRALWDVARDGLASVSYTNTSLFAVATVHGLYCE</sequence>
<comment type="subunit">
    <text evidence="3 4">Interacts with ENG/endoglin, TGFBR2 and TGFBR3 (PubMed:16982625). Interacts with PPP1CC (PubMed:23789093).</text>
</comment>
<comment type="interaction">
    <interactant intactId="EBI-4311709">
        <id>Q5JR98</id>
    </interactant>
    <interactant intactId="EBI-724076">
        <id>Q99750</id>
        <label>MDFI</label>
    </interactant>
    <organismsDiffer>false</organismsDiffer>
    <experiments>3</experiments>
</comment>
<comment type="interaction">
    <interactant intactId="EBI-4311709">
        <id>Q5JR98</id>
    </interactant>
    <interactant intactId="EBI-356289">
        <id>P36873-1</id>
        <label>PPP1CC</label>
    </interactant>
    <organismsDiffer>false</organismsDiffer>
    <experiments>2</experiments>
</comment>
<comment type="interaction">
    <interactant intactId="EBI-4311709">
        <id>Q5JR98</id>
    </interactant>
    <interactant intactId="EBI-3964623">
        <id>P36873-2</id>
        <label>PPP1CC</label>
    </interactant>
    <organismsDiffer>false</organismsDiffer>
    <experiments>3</experiments>
</comment>
<comment type="subcellular location">
    <subcellularLocation>
        <location evidence="4">Cell projection</location>
        <location evidence="4">Cilium</location>
        <location evidence="4">Flagellum</location>
    </subcellularLocation>
    <subcellularLocation>
        <location evidence="4">Cytoplasmic vesicle</location>
        <location evidence="4">Secretory vesicle</location>
        <location evidence="4">Acrosome</location>
    </subcellularLocation>
    <subcellularLocation>
        <location evidence="4">Cytoplasm</location>
        <location evidence="4">Cytoskeleton</location>
        <location evidence="4">Cilium axoneme</location>
    </subcellularLocation>
    <subcellularLocation>
        <location evidence="1">Cytoplasm</location>
    </subcellularLocation>
    <subcellularLocation>
        <location evidence="1">Nucleus</location>
    </subcellularLocation>
    <subcellularLocation>
        <location evidence="4">Cytoplasm</location>
        <location evidence="4">Cytoskeleton</location>
        <location evidence="4">Microtubule organizing center</location>
    </subcellularLocation>
    <text evidence="4">Present along the entire length of the flagellum, including principal and endpiece, and more predominantly in the midpiece region.</text>
</comment>
<comment type="tissue specificity">
    <text evidence="3 4">Ubiquitously expressed (PubMed:16982625). Expressed in testis (at protein level) (PubMed:23789093).</text>
</comment>
<comment type="similarity">
    <text evidence="6">Belongs to the dynein light chain Tctex-type family.</text>
</comment>
<keyword id="KW-0966">Cell projection</keyword>
<keyword id="KW-0969">Cilium</keyword>
<keyword id="KW-0963">Cytoplasm</keyword>
<keyword id="KW-0968">Cytoplasmic vesicle</keyword>
<keyword id="KW-0206">Cytoskeleton</keyword>
<keyword id="KW-0282">Flagellum</keyword>
<keyword id="KW-0539">Nucleus</keyword>
<keyword id="KW-0597">Phosphoprotein</keyword>
<keyword id="KW-1267">Proteomics identification</keyword>
<keyword id="KW-1185">Reference proteome</keyword>
<protein>
    <recommendedName>
        <fullName>Dynein light chain Tctex-type 4</fullName>
    </recommendedName>
    <alternativeName>
        <fullName>Protein N22.1</fullName>
    </alternativeName>
    <alternativeName>
        <fullName>Tctex-2-beta</fullName>
    </alternativeName>
    <alternativeName>
        <fullName>Tctex1 domain-containing protein 4</fullName>
    </alternativeName>
</protein>
<name>DYLT4_HUMAN</name>
<feature type="chain" id="PRO_0000316872" description="Dynein light chain Tctex-type 4">
    <location>
        <begin position="1"/>
        <end position="221"/>
    </location>
</feature>
<feature type="region of interest" description="Disordered" evidence="2">
    <location>
        <begin position="1"/>
        <end position="52"/>
    </location>
</feature>
<feature type="region of interest" description="Disordered" evidence="2">
    <location>
        <begin position="65"/>
        <end position="87"/>
    </location>
</feature>
<feature type="compositionally biased region" description="Basic and acidic residues" evidence="2">
    <location>
        <begin position="10"/>
        <end position="21"/>
    </location>
</feature>
<feature type="modified residue" description="Phosphoserine" evidence="1">
    <location>
        <position position="66"/>
    </location>
</feature>
<feature type="sequence variant" id="VAR_087892" evidence="5">
    <original>P</original>
    <variation>L</variation>
    <location>
        <position position="47"/>
    </location>
</feature>
<feature type="mutagenesis site" description="Partially reduces the binding to PP1CC." evidence="4">
    <original>RVSF</original>
    <variation>AAAA</variation>
    <location>
        <begin position="90"/>
        <end position="93"/>
    </location>
</feature>
<feature type="mutagenesis site" description="Decreased colocalization with PPP1CC by 27%." evidence="4">
    <original>F</original>
    <variation>A</variation>
    <location>
        <position position="93"/>
    </location>
</feature>
<evidence type="ECO:0000250" key="1">
    <source>
        <dbReference type="UniProtKB" id="Q8CDY7"/>
    </source>
</evidence>
<evidence type="ECO:0000256" key="2">
    <source>
        <dbReference type="SAM" id="MobiDB-lite"/>
    </source>
</evidence>
<evidence type="ECO:0000269" key="3">
    <source>
    </source>
</evidence>
<evidence type="ECO:0000269" key="4">
    <source>
    </source>
</evidence>
<evidence type="ECO:0000269" key="5">
    <source>
    </source>
</evidence>
<evidence type="ECO:0000305" key="6"/>
<evidence type="ECO:0000312" key="7">
    <source>
        <dbReference type="HGNC" id="HGNC:32315"/>
    </source>
</evidence>
<gene>
    <name evidence="7" type="primary">DYNLT4</name>
    <name type="synonym">TCTEX1D4</name>
</gene>